<feature type="chain" id="PRO_0000344357" description="Small ribosomal subunit protein uS7cz/uS7cy">
    <location>
        <begin position="1"/>
        <end position="155"/>
    </location>
</feature>
<gene>
    <name type="primary">rps7-A</name>
</gene>
<gene>
    <name type="primary">rps7-B</name>
</gene>
<geneLocation type="chloroplast"/>
<sequence>MSRRGTAEEKTAKSDPIYRNRLVNMLVNRILKHGKKSLAYQILYRAMKNIQQKTETNPLSVLRQAIRGVTPDIAVKARRVGGSTHQVPVEIGSAQGKALAIRWLLGASRKRPGRNMAFKLSSELVDAAKGSGDAIRKKEETHRMAEANRAFAHFR</sequence>
<reference key="1">
    <citation type="journal article" date="2007" name="BMC Genomics">
        <title>Rapid evolutionary change of common bean (Phaseolus vulgaris L) plastome, and the genomic diversification of legume chloroplasts.</title>
        <authorList>
            <person name="Guo X."/>
            <person name="Castillo-Ramirez S."/>
            <person name="Gonzalez V."/>
            <person name="Bustos P."/>
            <person name="Fernandez-Vazquez J.L."/>
            <person name="Santamaria R.I."/>
            <person name="Arellano J."/>
            <person name="Cevallos M.A."/>
            <person name="Davila G."/>
        </authorList>
    </citation>
    <scope>NUCLEOTIDE SEQUENCE [LARGE SCALE GENOMIC DNA]</scope>
    <source>
        <strain>cv. Negro Jamapa</strain>
    </source>
</reference>
<reference key="2">
    <citation type="submission" date="2007-10" db="EMBL/GenBank/DDBJ databases">
        <title>Complete nucleotide sequence of the plastid genome of the common bean, Phaseolus vulgaris.</title>
        <authorList>
            <person name="Moore M.J."/>
            <person name="Triplett E.W."/>
            <person name="Broughton W.J."/>
            <person name="Soltis P.S."/>
            <person name="Soltis D.E."/>
        </authorList>
    </citation>
    <scope>NUCLEOTIDE SEQUENCE [LARGE SCALE GENOMIC DNA]</scope>
</reference>
<keyword id="KW-0150">Chloroplast</keyword>
<keyword id="KW-0934">Plastid</keyword>
<keyword id="KW-0687">Ribonucleoprotein</keyword>
<keyword id="KW-0689">Ribosomal protein</keyword>
<keyword id="KW-0694">RNA-binding</keyword>
<keyword id="KW-0699">rRNA-binding</keyword>
<name>RR7_PHAVU</name>
<dbReference type="EMBL" id="DQ886273">
    <property type="protein sequence ID" value="ABH88138.1"/>
    <property type="molecule type" value="Genomic_DNA"/>
</dbReference>
<dbReference type="EMBL" id="DQ886273">
    <property type="protein sequence ID" value="ABP58679.1"/>
    <property type="molecule type" value="Genomic_DNA"/>
</dbReference>
<dbReference type="EMBL" id="EU196765">
    <property type="protein sequence ID" value="ABW22809.1"/>
    <property type="molecule type" value="Genomic_DNA"/>
</dbReference>
<dbReference type="EMBL" id="EU196765">
    <property type="protein sequence ID" value="ABW22822.1"/>
    <property type="molecule type" value="Genomic_DNA"/>
</dbReference>
<dbReference type="SMR" id="A4GGF5"/>
<dbReference type="KEGG" id="pvu:4961748"/>
<dbReference type="KEGG" id="pvu:5075299"/>
<dbReference type="eggNOG" id="KOG3291">
    <property type="taxonomic scope" value="Eukaryota"/>
</dbReference>
<dbReference type="GO" id="GO:0009507">
    <property type="term" value="C:chloroplast"/>
    <property type="evidence" value="ECO:0007669"/>
    <property type="project" value="UniProtKB-SubCell"/>
</dbReference>
<dbReference type="GO" id="GO:0015935">
    <property type="term" value="C:small ribosomal subunit"/>
    <property type="evidence" value="ECO:0007669"/>
    <property type="project" value="InterPro"/>
</dbReference>
<dbReference type="GO" id="GO:0019843">
    <property type="term" value="F:rRNA binding"/>
    <property type="evidence" value="ECO:0007669"/>
    <property type="project" value="UniProtKB-UniRule"/>
</dbReference>
<dbReference type="GO" id="GO:0003735">
    <property type="term" value="F:structural constituent of ribosome"/>
    <property type="evidence" value="ECO:0007669"/>
    <property type="project" value="InterPro"/>
</dbReference>
<dbReference type="GO" id="GO:0006412">
    <property type="term" value="P:translation"/>
    <property type="evidence" value="ECO:0007669"/>
    <property type="project" value="UniProtKB-UniRule"/>
</dbReference>
<dbReference type="CDD" id="cd14871">
    <property type="entry name" value="uS7_Chloroplast"/>
    <property type="match status" value="1"/>
</dbReference>
<dbReference type="FunFam" id="1.10.455.10:FF:000001">
    <property type="entry name" value="30S ribosomal protein S7"/>
    <property type="match status" value="1"/>
</dbReference>
<dbReference type="Gene3D" id="1.10.455.10">
    <property type="entry name" value="Ribosomal protein S7 domain"/>
    <property type="match status" value="1"/>
</dbReference>
<dbReference type="HAMAP" id="MF_00480_B">
    <property type="entry name" value="Ribosomal_uS7_B"/>
    <property type="match status" value="1"/>
</dbReference>
<dbReference type="InterPro" id="IPR000235">
    <property type="entry name" value="Ribosomal_uS7"/>
</dbReference>
<dbReference type="InterPro" id="IPR005717">
    <property type="entry name" value="Ribosomal_uS7_bac/org-type"/>
</dbReference>
<dbReference type="InterPro" id="IPR020606">
    <property type="entry name" value="Ribosomal_uS7_CS"/>
</dbReference>
<dbReference type="InterPro" id="IPR023798">
    <property type="entry name" value="Ribosomal_uS7_dom"/>
</dbReference>
<dbReference type="InterPro" id="IPR036823">
    <property type="entry name" value="Ribosomal_uS7_dom_sf"/>
</dbReference>
<dbReference type="NCBIfam" id="TIGR01029">
    <property type="entry name" value="rpsG_bact"/>
    <property type="match status" value="1"/>
</dbReference>
<dbReference type="PANTHER" id="PTHR11205">
    <property type="entry name" value="RIBOSOMAL PROTEIN S7"/>
    <property type="match status" value="1"/>
</dbReference>
<dbReference type="Pfam" id="PF00177">
    <property type="entry name" value="Ribosomal_S7"/>
    <property type="match status" value="1"/>
</dbReference>
<dbReference type="PIRSF" id="PIRSF002122">
    <property type="entry name" value="RPS7p_RPS7a_RPS5e_RPS7o"/>
    <property type="match status" value="1"/>
</dbReference>
<dbReference type="SUPFAM" id="SSF47973">
    <property type="entry name" value="Ribosomal protein S7"/>
    <property type="match status" value="1"/>
</dbReference>
<dbReference type="PROSITE" id="PS00052">
    <property type="entry name" value="RIBOSOMAL_S7"/>
    <property type="match status" value="1"/>
</dbReference>
<evidence type="ECO:0000250" key="1"/>
<evidence type="ECO:0000255" key="2">
    <source>
        <dbReference type="HAMAP-Rule" id="MF_00480"/>
    </source>
</evidence>
<evidence type="ECO:0000305" key="3"/>
<proteinExistence type="inferred from homology"/>
<comment type="function">
    <text evidence="1">One of the primary rRNA binding proteins, it binds directly to 16S rRNA where it nucleates assembly of the head domain of the 30S subunit.</text>
</comment>
<comment type="subunit">
    <text evidence="1">Part of the 30S ribosomal subunit.</text>
</comment>
<comment type="subcellular location">
    <subcellularLocation>
        <location>Plastid</location>
        <location>Chloroplast</location>
    </subcellularLocation>
</comment>
<comment type="similarity">
    <text evidence="3">Belongs to the universal ribosomal protein uS7 family.</text>
</comment>
<protein>
    <recommendedName>
        <fullName evidence="2">Small ribosomal subunit protein uS7cz/uS7cy</fullName>
    </recommendedName>
    <alternativeName>
        <fullName>30S ribosomal protein S7, chloroplastic</fullName>
    </alternativeName>
</protein>
<organism>
    <name type="scientific">Phaseolus vulgaris</name>
    <name type="common">Kidney bean</name>
    <name type="synonym">French bean</name>
    <dbReference type="NCBI Taxonomy" id="3885"/>
    <lineage>
        <taxon>Eukaryota</taxon>
        <taxon>Viridiplantae</taxon>
        <taxon>Streptophyta</taxon>
        <taxon>Embryophyta</taxon>
        <taxon>Tracheophyta</taxon>
        <taxon>Spermatophyta</taxon>
        <taxon>Magnoliopsida</taxon>
        <taxon>eudicotyledons</taxon>
        <taxon>Gunneridae</taxon>
        <taxon>Pentapetalae</taxon>
        <taxon>rosids</taxon>
        <taxon>fabids</taxon>
        <taxon>Fabales</taxon>
        <taxon>Fabaceae</taxon>
        <taxon>Papilionoideae</taxon>
        <taxon>50 kb inversion clade</taxon>
        <taxon>NPAAA clade</taxon>
        <taxon>indigoferoid/millettioid clade</taxon>
        <taxon>Phaseoleae</taxon>
        <taxon>Phaseolus</taxon>
    </lineage>
</organism>
<accession>A4GGF5</accession>